<comment type="subcellular location">
    <subcellularLocation>
        <location evidence="1">Secreted</location>
    </subcellularLocation>
</comment>
<comment type="similarity">
    <text evidence="2">Belongs to the peptidase S1B family.</text>
</comment>
<feature type="signal peptide" evidence="1">
    <location>
        <begin position="1"/>
        <end position="35"/>
    </location>
</feature>
<feature type="chain" id="PRO_0000359530" description="Serine protease SplA">
    <location>
        <begin position="36"/>
        <end position="235"/>
    </location>
</feature>
<feature type="active site" description="Charge relay system" evidence="1">
    <location>
        <position position="74"/>
    </location>
</feature>
<feature type="active site" description="Charge relay system" evidence="1">
    <location>
        <position position="113"/>
    </location>
</feature>
<feature type="active site" description="Charge relay system" evidence="1">
    <location>
        <position position="189"/>
    </location>
</feature>
<reference key="1">
    <citation type="journal article" date="2001" name="Lancet">
        <title>Whole genome sequencing of meticillin-resistant Staphylococcus aureus.</title>
        <authorList>
            <person name="Kuroda M."/>
            <person name="Ohta T."/>
            <person name="Uchiyama I."/>
            <person name="Baba T."/>
            <person name="Yuzawa H."/>
            <person name="Kobayashi I."/>
            <person name="Cui L."/>
            <person name="Oguchi A."/>
            <person name="Aoki K."/>
            <person name="Nagai Y."/>
            <person name="Lian J.-Q."/>
            <person name="Ito T."/>
            <person name="Kanamori M."/>
            <person name="Matsumaru H."/>
            <person name="Maruyama A."/>
            <person name="Murakami H."/>
            <person name="Hosoyama A."/>
            <person name="Mizutani-Ui Y."/>
            <person name="Takahashi N.K."/>
            <person name="Sawano T."/>
            <person name="Inoue R."/>
            <person name="Kaito C."/>
            <person name="Sekimizu K."/>
            <person name="Hirakawa H."/>
            <person name="Kuhara S."/>
            <person name="Goto S."/>
            <person name="Yabuzaki J."/>
            <person name="Kanehisa M."/>
            <person name="Yamashita A."/>
            <person name="Oshima K."/>
            <person name="Furuya K."/>
            <person name="Yoshino C."/>
            <person name="Shiba T."/>
            <person name="Hattori M."/>
            <person name="Ogasawara N."/>
            <person name="Hayashi H."/>
            <person name="Hiramatsu K."/>
        </authorList>
    </citation>
    <scope>NUCLEOTIDE SEQUENCE [LARGE SCALE GENOMIC DNA]</scope>
    <source>
        <strain>Mu50 / ATCC 700699</strain>
    </source>
</reference>
<name>SPLA_STAAM</name>
<accession>Q99T60</accession>
<sequence>MNKNVMVKGLTALTILTSLGFAENISNQPHSIAKAEKNVKEITDATKAPYNSVVAFAGGTGVVVGKNTIVTNKHIAKSNDIFKNRVAAHYSSKGKGGGNYDVKDIVEYPGKEDLAIVHVHETSTEGLNFNKNVSYTKFAEGAKAKDRISVIGYPKGAQTKYKMFESTGTINHISGTFIEFDAYAQPGNSGSPVLNSKHELIGILYAGSGKDESEKNFGVYFTPQLKEFIQNNIEK</sequence>
<gene>
    <name type="primary">splA</name>
    <name type="ordered locus">SAV1813</name>
</gene>
<protein>
    <recommendedName>
        <fullName>Serine protease SplA</fullName>
        <ecNumber>3.4.21.-</ecNumber>
    </recommendedName>
</protein>
<organism>
    <name type="scientific">Staphylococcus aureus (strain Mu50 / ATCC 700699)</name>
    <dbReference type="NCBI Taxonomy" id="158878"/>
    <lineage>
        <taxon>Bacteria</taxon>
        <taxon>Bacillati</taxon>
        <taxon>Bacillota</taxon>
        <taxon>Bacilli</taxon>
        <taxon>Bacillales</taxon>
        <taxon>Staphylococcaceae</taxon>
        <taxon>Staphylococcus</taxon>
    </lineage>
</organism>
<dbReference type="EC" id="3.4.21.-"/>
<dbReference type="EMBL" id="BA000017">
    <property type="protein sequence ID" value="BAB57975.1"/>
    <property type="molecule type" value="Genomic_DNA"/>
</dbReference>
<dbReference type="RefSeq" id="WP_001039427.1">
    <property type="nucleotide sequence ID" value="NC_002758.2"/>
</dbReference>
<dbReference type="SMR" id="Q99T60"/>
<dbReference type="MEROPS" id="S01.503"/>
<dbReference type="KEGG" id="sav:SAV1813"/>
<dbReference type="HOGENOM" id="CLU_073589_2_0_9"/>
<dbReference type="PhylomeDB" id="Q99T60"/>
<dbReference type="Proteomes" id="UP000002481">
    <property type="component" value="Chromosome"/>
</dbReference>
<dbReference type="GO" id="GO:0005576">
    <property type="term" value="C:extracellular region"/>
    <property type="evidence" value="ECO:0007669"/>
    <property type="project" value="UniProtKB-SubCell"/>
</dbReference>
<dbReference type="GO" id="GO:0004252">
    <property type="term" value="F:serine-type endopeptidase activity"/>
    <property type="evidence" value="ECO:0007669"/>
    <property type="project" value="InterPro"/>
</dbReference>
<dbReference type="GO" id="GO:0006508">
    <property type="term" value="P:proteolysis"/>
    <property type="evidence" value="ECO:0007669"/>
    <property type="project" value="UniProtKB-KW"/>
</dbReference>
<dbReference type="Gene3D" id="2.40.10.10">
    <property type="entry name" value="Trypsin-like serine proteases"/>
    <property type="match status" value="2"/>
</dbReference>
<dbReference type="InterPro" id="IPR009003">
    <property type="entry name" value="Peptidase_S1_PA"/>
</dbReference>
<dbReference type="InterPro" id="IPR043504">
    <property type="entry name" value="Peptidase_S1_PA_chymotrypsin"/>
</dbReference>
<dbReference type="InterPro" id="IPR008256">
    <property type="entry name" value="Peptidase_S1B"/>
</dbReference>
<dbReference type="InterPro" id="IPR008353">
    <property type="entry name" value="Peptidase_S1B_tx"/>
</dbReference>
<dbReference type="InterPro" id="IPR001254">
    <property type="entry name" value="Trypsin_dom"/>
</dbReference>
<dbReference type="InterPro" id="IPR028301">
    <property type="entry name" value="V8_his_AS"/>
</dbReference>
<dbReference type="PANTHER" id="PTHR43019:SF23">
    <property type="entry name" value="PROTEASE DO-LIKE 5, CHLOROPLASTIC"/>
    <property type="match status" value="1"/>
</dbReference>
<dbReference type="PANTHER" id="PTHR43019">
    <property type="entry name" value="SERINE ENDOPROTEASE DEGS"/>
    <property type="match status" value="1"/>
</dbReference>
<dbReference type="Pfam" id="PF00089">
    <property type="entry name" value="Trypsin"/>
    <property type="match status" value="1"/>
</dbReference>
<dbReference type="PRINTS" id="PR01774">
    <property type="entry name" value="EXFOLTOXIN"/>
</dbReference>
<dbReference type="PRINTS" id="PR00839">
    <property type="entry name" value="V8PROTEASE"/>
</dbReference>
<dbReference type="SUPFAM" id="SSF50494">
    <property type="entry name" value="Trypsin-like serine proteases"/>
    <property type="match status" value="1"/>
</dbReference>
<dbReference type="PROSITE" id="PS00672">
    <property type="entry name" value="V8_HIS"/>
    <property type="match status" value="1"/>
</dbReference>
<evidence type="ECO:0000250" key="1"/>
<evidence type="ECO:0000305" key="2"/>
<keyword id="KW-0378">Hydrolase</keyword>
<keyword id="KW-0645">Protease</keyword>
<keyword id="KW-0964">Secreted</keyword>
<keyword id="KW-0720">Serine protease</keyword>
<keyword id="KW-0732">Signal</keyword>
<proteinExistence type="inferred from homology"/>